<dbReference type="EMBL" id="AE016828">
    <property type="protein sequence ID" value="AAO89798.1"/>
    <property type="molecule type" value="Genomic_DNA"/>
</dbReference>
<dbReference type="RefSeq" id="NP_819284.1">
    <property type="nucleotide sequence ID" value="NC_002971.4"/>
</dbReference>
<dbReference type="RefSeq" id="WP_010957455.1">
    <property type="nucleotide sequence ID" value="NC_002971.4"/>
</dbReference>
<dbReference type="SMR" id="Q83ES2"/>
<dbReference type="STRING" id="227377.CBU_0240"/>
<dbReference type="DNASU" id="1208121"/>
<dbReference type="EnsemblBacteria" id="AAO89798">
    <property type="protein sequence ID" value="AAO89798"/>
    <property type="gene ID" value="CBU_0240"/>
</dbReference>
<dbReference type="GeneID" id="1208121"/>
<dbReference type="KEGG" id="cbu:CBU_0240"/>
<dbReference type="PATRIC" id="fig|227377.7.peg.235"/>
<dbReference type="eggNOG" id="COG0089">
    <property type="taxonomic scope" value="Bacteria"/>
</dbReference>
<dbReference type="HOGENOM" id="CLU_037562_3_1_6"/>
<dbReference type="OrthoDB" id="9793353at2"/>
<dbReference type="Proteomes" id="UP000002671">
    <property type="component" value="Chromosome"/>
</dbReference>
<dbReference type="GO" id="GO:0022625">
    <property type="term" value="C:cytosolic large ribosomal subunit"/>
    <property type="evidence" value="ECO:0000318"/>
    <property type="project" value="GO_Central"/>
</dbReference>
<dbReference type="GO" id="GO:0019843">
    <property type="term" value="F:rRNA binding"/>
    <property type="evidence" value="ECO:0007669"/>
    <property type="project" value="UniProtKB-UniRule"/>
</dbReference>
<dbReference type="GO" id="GO:0003735">
    <property type="term" value="F:structural constituent of ribosome"/>
    <property type="evidence" value="ECO:0000318"/>
    <property type="project" value="GO_Central"/>
</dbReference>
<dbReference type="GO" id="GO:0006412">
    <property type="term" value="P:translation"/>
    <property type="evidence" value="ECO:0007669"/>
    <property type="project" value="UniProtKB-UniRule"/>
</dbReference>
<dbReference type="FunFam" id="3.30.70.330:FF:000001">
    <property type="entry name" value="50S ribosomal protein L23"/>
    <property type="match status" value="1"/>
</dbReference>
<dbReference type="Gene3D" id="3.30.70.330">
    <property type="match status" value="1"/>
</dbReference>
<dbReference type="HAMAP" id="MF_01369_B">
    <property type="entry name" value="Ribosomal_uL23_B"/>
    <property type="match status" value="1"/>
</dbReference>
<dbReference type="InterPro" id="IPR012677">
    <property type="entry name" value="Nucleotide-bd_a/b_plait_sf"/>
</dbReference>
<dbReference type="InterPro" id="IPR013025">
    <property type="entry name" value="Ribosomal_uL23-like"/>
</dbReference>
<dbReference type="InterPro" id="IPR012678">
    <property type="entry name" value="Ribosomal_uL23/eL15/eS24_sf"/>
</dbReference>
<dbReference type="NCBIfam" id="NF004359">
    <property type="entry name" value="PRK05738.1-3"/>
    <property type="match status" value="1"/>
</dbReference>
<dbReference type="NCBIfam" id="NF004363">
    <property type="entry name" value="PRK05738.2-4"/>
    <property type="match status" value="1"/>
</dbReference>
<dbReference type="PANTHER" id="PTHR11620">
    <property type="entry name" value="60S RIBOSOMAL PROTEIN L23A"/>
    <property type="match status" value="1"/>
</dbReference>
<dbReference type="Pfam" id="PF00276">
    <property type="entry name" value="Ribosomal_L23"/>
    <property type="match status" value="1"/>
</dbReference>
<dbReference type="SUPFAM" id="SSF54189">
    <property type="entry name" value="Ribosomal proteins S24e, L23 and L15e"/>
    <property type="match status" value="1"/>
</dbReference>
<reference key="1">
    <citation type="journal article" date="2003" name="Proc. Natl. Acad. Sci. U.S.A.">
        <title>Complete genome sequence of the Q-fever pathogen, Coxiella burnetii.</title>
        <authorList>
            <person name="Seshadri R."/>
            <person name="Paulsen I.T."/>
            <person name="Eisen J.A."/>
            <person name="Read T.D."/>
            <person name="Nelson K.E."/>
            <person name="Nelson W.C."/>
            <person name="Ward N.L."/>
            <person name="Tettelin H."/>
            <person name="Davidsen T.M."/>
            <person name="Beanan M.J."/>
            <person name="DeBoy R.T."/>
            <person name="Daugherty S.C."/>
            <person name="Brinkac L.M."/>
            <person name="Madupu R."/>
            <person name="Dodson R.J."/>
            <person name="Khouri H.M."/>
            <person name="Lee K.H."/>
            <person name="Carty H.A."/>
            <person name="Scanlan D."/>
            <person name="Heinzen R.A."/>
            <person name="Thompson H.A."/>
            <person name="Samuel J.E."/>
            <person name="Fraser C.M."/>
            <person name="Heidelberg J.F."/>
        </authorList>
    </citation>
    <scope>NUCLEOTIDE SEQUENCE [LARGE SCALE GENOMIC DNA]</scope>
    <source>
        <strain>RSA 493 / Nine Mile phase I</strain>
    </source>
</reference>
<keyword id="KW-1185">Reference proteome</keyword>
<keyword id="KW-0687">Ribonucleoprotein</keyword>
<keyword id="KW-0689">Ribosomal protein</keyword>
<keyword id="KW-0694">RNA-binding</keyword>
<keyword id="KW-0699">rRNA-binding</keyword>
<feature type="chain" id="PRO_0000272737" description="Large ribosomal subunit protein uL23">
    <location>
        <begin position="1"/>
        <end position="95"/>
    </location>
</feature>
<proteinExistence type="inferred from homology"/>
<sequence>MNEERLFEILLAPHISEKGALTTGQYVFEVMPDATKPEIKRAVEKQFNVTVKSVRTCNVKGKTTRFRQVRGRRKNWKKAYVMLAPGSEIDIAAGE</sequence>
<comment type="function">
    <text evidence="1">One of the early assembly proteins it binds 23S rRNA. One of the proteins that surrounds the polypeptide exit tunnel on the outside of the ribosome. Forms the main docking site for trigger factor binding to the ribosome.</text>
</comment>
<comment type="subunit">
    <text evidence="1">Part of the 50S ribosomal subunit. Contacts protein L29, and trigger factor when it is bound to the ribosome.</text>
</comment>
<comment type="similarity">
    <text evidence="1">Belongs to the universal ribosomal protein uL23 family.</text>
</comment>
<name>RL23_COXBU</name>
<organism>
    <name type="scientific">Coxiella burnetii (strain RSA 493 / Nine Mile phase I)</name>
    <dbReference type="NCBI Taxonomy" id="227377"/>
    <lineage>
        <taxon>Bacteria</taxon>
        <taxon>Pseudomonadati</taxon>
        <taxon>Pseudomonadota</taxon>
        <taxon>Gammaproteobacteria</taxon>
        <taxon>Legionellales</taxon>
        <taxon>Coxiellaceae</taxon>
        <taxon>Coxiella</taxon>
    </lineage>
</organism>
<protein>
    <recommendedName>
        <fullName evidence="1">Large ribosomal subunit protein uL23</fullName>
    </recommendedName>
    <alternativeName>
        <fullName evidence="2">50S ribosomal protein L23</fullName>
    </alternativeName>
</protein>
<evidence type="ECO:0000255" key="1">
    <source>
        <dbReference type="HAMAP-Rule" id="MF_01369"/>
    </source>
</evidence>
<evidence type="ECO:0000305" key="2"/>
<gene>
    <name evidence="1" type="primary">rplW</name>
    <name type="ordered locus">CBU_0240</name>
</gene>
<accession>Q83ES2</accession>